<protein>
    <recommendedName>
        <fullName evidence="1">Pyrimidine/purine nucleoside phosphorylase 1</fullName>
        <ecNumber evidence="1">2.4.2.1</ecNumber>
        <ecNumber evidence="1">2.4.2.2</ecNumber>
    </recommendedName>
    <alternativeName>
        <fullName evidence="1">Adenosine phosphorylase 1</fullName>
    </alternativeName>
    <alternativeName>
        <fullName evidence="1">Cytidine phosphorylase 1</fullName>
    </alternativeName>
    <alternativeName>
        <fullName evidence="1">Guanosine phosphorylase 1</fullName>
    </alternativeName>
    <alternativeName>
        <fullName evidence="1">Inosine phosphorylase 1</fullName>
    </alternativeName>
    <alternativeName>
        <fullName evidence="1">Thymidine phosphorylase 1</fullName>
    </alternativeName>
    <alternativeName>
        <fullName evidence="1">Uridine phosphorylase 1</fullName>
    </alternativeName>
    <alternativeName>
        <fullName evidence="1">Xanthosine phosphorylase 1</fullName>
    </alternativeName>
</protein>
<sequence>MTAAQFTNVTVNAQATISYDGRCSSHTIMFEDGRHKTLGVILPCDNLVEHYHFSTNTSERIEITGGECEVKINGEEAFSYYRAGQSFVVEGNSGFNLRTEEIVQYICHLEG</sequence>
<gene>
    <name evidence="1" type="primary">ppnP1</name>
    <name type="ordered locus">Psyc_0059</name>
</gene>
<organism>
    <name type="scientific">Psychrobacter arcticus (strain DSM 17307 / VKM B-2377 / 273-4)</name>
    <dbReference type="NCBI Taxonomy" id="259536"/>
    <lineage>
        <taxon>Bacteria</taxon>
        <taxon>Pseudomonadati</taxon>
        <taxon>Pseudomonadota</taxon>
        <taxon>Gammaproteobacteria</taxon>
        <taxon>Moraxellales</taxon>
        <taxon>Moraxellaceae</taxon>
        <taxon>Psychrobacter</taxon>
    </lineage>
</organism>
<feature type="chain" id="PRO_0000298716" description="Pyrimidine/purine nucleoside phosphorylase 1">
    <location>
        <begin position="1"/>
        <end position="111"/>
    </location>
</feature>
<reference key="1">
    <citation type="journal article" date="2010" name="Appl. Environ. Microbiol.">
        <title>The genome sequence of Psychrobacter arcticus 273-4, a psychroactive Siberian permafrost bacterium, reveals mechanisms for adaptation to low-temperature growth.</title>
        <authorList>
            <person name="Ayala-del-Rio H.L."/>
            <person name="Chain P.S."/>
            <person name="Grzymski J.J."/>
            <person name="Ponder M.A."/>
            <person name="Ivanova N."/>
            <person name="Bergholz P.W."/>
            <person name="Di Bartolo G."/>
            <person name="Hauser L."/>
            <person name="Land M."/>
            <person name="Bakermans C."/>
            <person name="Rodrigues D."/>
            <person name="Klappenbach J."/>
            <person name="Zarka D."/>
            <person name="Larimer F."/>
            <person name="Richardson P."/>
            <person name="Murray A."/>
            <person name="Thomashow M."/>
            <person name="Tiedje J.M."/>
        </authorList>
    </citation>
    <scope>NUCLEOTIDE SEQUENCE [LARGE SCALE GENOMIC DNA]</scope>
    <source>
        <strain>DSM 17307 / VKM B-2377 / 273-4</strain>
    </source>
</reference>
<evidence type="ECO:0000255" key="1">
    <source>
        <dbReference type="HAMAP-Rule" id="MF_01537"/>
    </source>
</evidence>
<name>PPNP1_PSYA2</name>
<proteinExistence type="inferred from homology"/>
<dbReference type="EC" id="2.4.2.1" evidence="1"/>
<dbReference type="EC" id="2.4.2.2" evidence="1"/>
<dbReference type="EMBL" id="CP000082">
    <property type="protein sequence ID" value="AAZ17933.1"/>
    <property type="molecule type" value="Genomic_DNA"/>
</dbReference>
<dbReference type="RefSeq" id="WP_011279372.1">
    <property type="nucleotide sequence ID" value="NC_007204.1"/>
</dbReference>
<dbReference type="SMR" id="Q4FVM5"/>
<dbReference type="STRING" id="259536.Psyc_0059"/>
<dbReference type="KEGG" id="par:Psyc_0059"/>
<dbReference type="eggNOG" id="COG3123">
    <property type="taxonomic scope" value="Bacteria"/>
</dbReference>
<dbReference type="HOGENOM" id="CLU_157874_1_0_6"/>
<dbReference type="OrthoDB" id="9793848at2"/>
<dbReference type="Proteomes" id="UP000000546">
    <property type="component" value="Chromosome"/>
</dbReference>
<dbReference type="GO" id="GO:0005829">
    <property type="term" value="C:cytosol"/>
    <property type="evidence" value="ECO:0007669"/>
    <property type="project" value="TreeGrafter"/>
</dbReference>
<dbReference type="GO" id="GO:0047975">
    <property type="term" value="F:guanosine phosphorylase activity"/>
    <property type="evidence" value="ECO:0007669"/>
    <property type="project" value="UniProtKB-EC"/>
</dbReference>
<dbReference type="GO" id="GO:0004731">
    <property type="term" value="F:purine-nucleoside phosphorylase activity"/>
    <property type="evidence" value="ECO:0007669"/>
    <property type="project" value="UniProtKB-UniRule"/>
</dbReference>
<dbReference type="GO" id="GO:0009032">
    <property type="term" value="F:thymidine phosphorylase activity"/>
    <property type="evidence" value="ECO:0007669"/>
    <property type="project" value="UniProtKB-EC"/>
</dbReference>
<dbReference type="GO" id="GO:0004850">
    <property type="term" value="F:uridine phosphorylase activity"/>
    <property type="evidence" value="ECO:0007669"/>
    <property type="project" value="UniProtKB-EC"/>
</dbReference>
<dbReference type="CDD" id="cd20296">
    <property type="entry name" value="cupin_PpnP-like"/>
    <property type="match status" value="1"/>
</dbReference>
<dbReference type="Gene3D" id="2.60.120.10">
    <property type="entry name" value="Jelly Rolls"/>
    <property type="match status" value="1"/>
</dbReference>
<dbReference type="HAMAP" id="MF_01537">
    <property type="entry name" value="Nucleos_phosphorylase_PpnP"/>
    <property type="match status" value="1"/>
</dbReference>
<dbReference type="InterPro" id="IPR009664">
    <property type="entry name" value="Ppnp"/>
</dbReference>
<dbReference type="InterPro" id="IPR014710">
    <property type="entry name" value="RmlC-like_jellyroll"/>
</dbReference>
<dbReference type="InterPro" id="IPR011051">
    <property type="entry name" value="RmlC_Cupin_sf"/>
</dbReference>
<dbReference type="PANTHER" id="PTHR36540">
    <property type="entry name" value="PYRIMIDINE/PURINE NUCLEOSIDE PHOSPHORYLASE"/>
    <property type="match status" value="1"/>
</dbReference>
<dbReference type="PANTHER" id="PTHR36540:SF1">
    <property type="entry name" value="PYRIMIDINE_PURINE NUCLEOSIDE PHOSPHORYLASE"/>
    <property type="match status" value="1"/>
</dbReference>
<dbReference type="Pfam" id="PF06865">
    <property type="entry name" value="Ppnp"/>
    <property type="match status" value="1"/>
</dbReference>
<dbReference type="SUPFAM" id="SSF51182">
    <property type="entry name" value="RmlC-like cupins"/>
    <property type="match status" value="1"/>
</dbReference>
<keyword id="KW-0328">Glycosyltransferase</keyword>
<keyword id="KW-1185">Reference proteome</keyword>
<keyword id="KW-0808">Transferase</keyword>
<comment type="function">
    <text evidence="1">Catalyzes the phosphorolysis of diverse nucleosides, yielding D-ribose 1-phosphate and the respective free bases. Can use uridine, adenosine, guanosine, cytidine, thymidine, inosine and xanthosine as substrates. Also catalyzes the reverse reactions.</text>
</comment>
<comment type="catalytic activity">
    <reaction evidence="1">
        <text>a purine D-ribonucleoside + phosphate = a purine nucleobase + alpha-D-ribose 1-phosphate</text>
        <dbReference type="Rhea" id="RHEA:19805"/>
        <dbReference type="ChEBI" id="CHEBI:26386"/>
        <dbReference type="ChEBI" id="CHEBI:43474"/>
        <dbReference type="ChEBI" id="CHEBI:57720"/>
        <dbReference type="ChEBI" id="CHEBI:142355"/>
        <dbReference type="EC" id="2.4.2.1"/>
    </reaction>
</comment>
<comment type="catalytic activity">
    <reaction evidence="1">
        <text>adenosine + phosphate = alpha-D-ribose 1-phosphate + adenine</text>
        <dbReference type="Rhea" id="RHEA:27642"/>
        <dbReference type="ChEBI" id="CHEBI:16335"/>
        <dbReference type="ChEBI" id="CHEBI:16708"/>
        <dbReference type="ChEBI" id="CHEBI:43474"/>
        <dbReference type="ChEBI" id="CHEBI:57720"/>
        <dbReference type="EC" id="2.4.2.1"/>
    </reaction>
</comment>
<comment type="catalytic activity">
    <reaction evidence="1">
        <text>cytidine + phosphate = cytosine + alpha-D-ribose 1-phosphate</text>
        <dbReference type="Rhea" id="RHEA:52540"/>
        <dbReference type="ChEBI" id="CHEBI:16040"/>
        <dbReference type="ChEBI" id="CHEBI:17562"/>
        <dbReference type="ChEBI" id="CHEBI:43474"/>
        <dbReference type="ChEBI" id="CHEBI:57720"/>
        <dbReference type="EC" id="2.4.2.2"/>
    </reaction>
</comment>
<comment type="catalytic activity">
    <reaction evidence="1">
        <text>guanosine + phosphate = alpha-D-ribose 1-phosphate + guanine</text>
        <dbReference type="Rhea" id="RHEA:13233"/>
        <dbReference type="ChEBI" id="CHEBI:16235"/>
        <dbReference type="ChEBI" id="CHEBI:16750"/>
        <dbReference type="ChEBI" id="CHEBI:43474"/>
        <dbReference type="ChEBI" id="CHEBI:57720"/>
        <dbReference type="EC" id="2.4.2.1"/>
    </reaction>
</comment>
<comment type="catalytic activity">
    <reaction evidence="1">
        <text>inosine + phosphate = alpha-D-ribose 1-phosphate + hypoxanthine</text>
        <dbReference type="Rhea" id="RHEA:27646"/>
        <dbReference type="ChEBI" id="CHEBI:17368"/>
        <dbReference type="ChEBI" id="CHEBI:17596"/>
        <dbReference type="ChEBI" id="CHEBI:43474"/>
        <dbReference type="ChEBI" id="CHEBI:57720"/>
        <dbReference type="EC" id="2.4.2.1"/>
    </reaction>
</comment>
<comment type="catalytic activity">
    <reaction evidence="1">
        <text>thymidine + phosphate = 2-deoxy-alpha-D-ribose 1-phosphate + thymine</text>
        <dbReference type="Rhea" id="RHEA:16037"/>
        <dbReference type="ChEBI" id="CHEBI:17748"/>
        <dbReference type="ChEBI" id="CHEBI:17821"/>
        <dbReference type="ChEBI" id="CHEBI:43474"/>
        <dbReference type="ChEBI" id="CHEBI:57259"/>
        <dbReference type="EC" id="2.4.2.2"/>
    </reaction>
</comment>
<comment type="catalytic activity">
    <reaction evidence="1">
        <text>uridine + phosphate = alpha-D-ribose 1-phosphate + uracil</text>
        <dbReference type="Rhea" id="RHEA:24388"/>
        <dbReference type="ChEBI" id="CHEBI:16704"/>
        <dbReference type="ChEBI" id="CHEBI:17568"/>
        <dbReference type="ChEBI" id="CHEBI:43474"/>
        <dbReference type="ChEBI" id="CHEBI:57720"/>
        <dbReference type="EC" id="2.4.2.2"/>
    </reaction>
</comment>
<comment type="catalytic activity">
    <reaction evidence="1">
        <text>xanthosine + phosphate = alpha-D-ribose 1-phosphate + xanthine</text>
        <dbReference type="Rhea" id="RHEA:27638"/>
        <dbReference type="ChEBI" id="CHEBI:17712"/>
        <dbReference type="ChEBI" id="CHEBI:18107"/>
        <dbReference type="ChEBI" id="CHEBI:43474"/>
        <dbReference type="ChEBI" id="CHEBI:57720"/>
        <dbReference type="EC" id="2.4.2.1"/>
    </reaction>
</comment>
<comment type="similarity">
    <text evidence="1">Belongs to the nucleoside phosphorylase PpnP family.</text>
</comment>
<accession>Q4FVM5</accession>